<keyword id="KW-0472">Membrane</keyword>
<keyword id="KW-1185">Reference proteome</keyword>
<keyword id="KW-0812">Transmembrane</keyword>
<keyword id="KW-1133">Transmembrane helix</keyword>
<name>Y596_MYCPN</name>
<accession>Q50333</accession>
<evidence type="ECO:0000255" key="1"/>
<evidence type="ECO:0000305" key="2"/>
<reference key="1">
    <citation type="journal article" date="1996" name="Nucleic Acids Res.">
        <title>Sequence analysis of 56 kb from the genome of the bacterium Mycoplasma pneumoniae comprising the dnaA region, the atp operon and a cluster of ribosomal protein genes.</title>
        <authorList>
            <person name="Hilbert H."/>
            <person name="Himmelreich R."/>
            <person name="Plagens H."/>
            <person name="Herrmann R."/>
        </authorList>
    </citation>
    <scope>NUCLEOTIDE SEQUENCE [GENOMIC DNA]</scope>
    <source>
        <strain>ATCC 29342 / M129 / Subtype 1</strain>
    </source>
</reference>
<reference key="2">
    <citation type="journal article" date="1996" name="Nucleic Acids Res.">
        <title>Complete sequence analysis of the genome of the bacterium Mycoplasma pneumoniae.</title>
        <authorList>
            <person name="Himmelreich R."/>
            <person name="Hilbert H."/>
            <person name="Plagens H."/>
            <person name="Pirkl E."/>
            <person name="Li B.-C."/>
            <person name="Herrmann R."/>
        </authorList>
    </citation>
    <scope>NUCLEOTIDE SEQUENCE [LARGE SCALE GENOMIC DNA]</scope>
    <source>
        <strain>ATCC 29342 / M129 / Subtype 1</strain>
    </source>
</reference>
<dbReference type="EMBL" id="U43738">
    <property type="protein sequence ID" value="AAC43661.1"/>
    <property type="molecule type" value="Genomic_DNA"/>
</dbReference>
<dbReference type="EMBL" id="U00089">
    <property type="protein sequence ID" value="AAB95894.1"/>
    <property type="molecule type" value="Genomic_DNA"/>
</dbReference>
<dbReference type="PIR" id="S62851">
    <property type="entry name" value="S62851"/>
</dbReference>
<dbReference type="RefSeq" id="NP_110285.1">
    <property type="nucleotide sequence ID" value="NC_000912.1"/>
</dbReference>
<dbReference type="RefSeq" id="WP_010874953.1">
    <property type="nucleotide sequence ID" value="NZ_OU342337.1"/>
</dbReference>
<dbReference type="SMR" id="Q50333"/>
<dbReference type="IntAct" id="Q50333">
    <property type="interactions" value="1"/>
</dbReference>
<dbReference type="STRING" id="272634.MPN_596"/>
<dbReference type="EnsemblBacteria" id="AAB95894">
    <property type="protein sequence ID" value="AAB95894"/>
    <property type="gene ID" value="MPN_596"/>
</dbReference>
<dbReference type="KEGG" id="mpn:MPN_596"/>
<dbReference type="PATRIC" id="fig|272634.6.peg.659"/>
<dbReference type="HOGENOM" id="CLU_478826_0_0_14"/>
<dbReference type="OrthoDB" id="397102at2"/>
<dbReference type="BioCyc" id="MPNE272634:G1GJ3-970-MONOMER"/>
<dbReference type="Proteomes" id="UP000000808">
    <property type="component" value="Chromosome"/>
</dbReference>
<dbReference type="GO" id="GO:0016020">
    <property type="term" value="C:membrane"/>
    <property type="evidence" value="ECO:0007669"/>
    <property type="project" value="UniProtKB-SubCell"/>
</dbReference>
<protein>
    <recommendedName>
        <fullName>Uncharacterized protein MG397 homolog</fullName>
    </recommendedName>
</protein>
<organism>
    <name type="scientific">Mycoplasma pneumoniae (strain ATCC 29342 / M129 / Subtype 1)</name>
    <name type="common">Mycoplasmoides pneumoniae</name>
    <dbReference type="NCBI Taxonomy" id="272634"/>
    <lineage>
        <taxon>Bacteria</taxon>
        <taxon>Bacillati</taxon>
        <taxon>Mycoplasmatota</taxon>
        <taxon>Mycoplasmoidales</taxon>
        <taxon>Mycoplasmoidaceae</taxon>
        <taxon>Mycoplasmoides</taxon>
    </lineage>
</organism>
<gene>
    <name type="ordered locus">MPN_596</name>
    <name type="ORF">D02_orf569</name>
    <name type="ORF">MP246</name>
</gene>
<proteinExistence type="predicted"/>
<comment type="subcellular location">
    <subcellularLocation>
        <location evidence="2">Membrane</location>
        <topology evidence="2">Single-pass membrane protein</topology>
    </subcellularLocation>
</comment>
<sequence>MVVIAALLGSLAVLAFLFYLWYLTIFIIVHKNQQYLEQTKALYNKLKLSNFNSVIVPFQLLRSEKKALEQPVKLLKSFQESFNSEINSALEQLLVFSEPKALYNCFWFNRNIKLLRKNLQGLHDKQQRYVKLTKNAIAYFDSSYDTLVFYRQAFCLLVSFINDFLVHKYDSLFYLNIINRISLLFKDVELHIKNKDVKQQNQALNKLHNNLAQTIITASRQYFFDVKVGYLNYHFQILSQKVTQLRSMKNKAINSQEVAKFQELITNIGATLAECSQALGNINLALCEQRINQAKEQIDVLSNAVSVKEKAISLVVSNVDSFLKSINHYQQQNALLQTLMKEIELMFQNNLDTVNIINQINEHSLLIAQKTQLLNQENALTEFIDYEKLFRLMSEAMKLLDGLKNLLNELFALSANKFDDYRFFVYTLDDFRFKFFQIENLIANEELIISEKTLKIISQAKHQFDDIFTQAKNDYEGAFSYLNEKVRFFQNQLTHVIVDVVGLMNLRSMCKHTFIFANKYRQESPQINESLETLTQFYQQQNYSETLSGLISLLGKIKSSAKQHHLDLN</sequence>
<feature type="chain" id="PRO_0000210593" description="Uncharacterized protein MG397 homolog">
    <location>
        <begin position="1"/>
        <end position="569"/>
    </location>
</feature>
<feature type="transmembrane region" description="Helical" evidence="1">
    <location>
        <begin position="2"/>
        <end position="22"/>
    </location>
</feature>